<reference key="1">
    <citation type="submission" date="2007-07" db="EMBL/GenBank/DDBJ databases">
        <title>Genome sequence of Campylobacter curvus 525.92 isolated from human feces.</title>
        <authorList>
            <person name="Fouts D.E."/>
            <person name="Mongodin E.F."/>
            <person name="Puiu D."/>
            <person name="Sebastian Y."/>
            <person name="Miller W.G."/>
            <person name="Mandrell R.E."/>
            <person name="Lastovica A.J."/>
            <person name="Nelson K.E."/>
        </authorList>
    </citation>
    <scope>NUCLEOTIDE SEQUENCE [LARGE SCALE GENOMIC DNA]</scope>
    <source>
        <strain>525.92</strain>
    </source>
</reference>
<accession>A7GZR7</accession>
<sequence>MSTWNDIYNHFDPVAFTLFGFSVHWYGIMYILALLSALGAAKYFVKKDNIPITDALLDNYFFWVEIGVILGARLGYIAIYSGEAVYFFTHPWQIFNPFHNGEFVGIRGMSYHGAVVGFLLATILFCKKYKQNLWQLLDLCALCIPFGYIFGRIGNFLNQELFGRATDVSWGINVFGILRHPSQLYEAALEGLAVFLILFFYRKFKKFDGELIALYAVLYTLARFVCEFFREPDAGIGFIIFGLSMGQILSILMFFGGILAYFFLKKNYIK</sequence>
<keyword id="KW-0997">Cell inner membrane</keyword>
<keyword id="KW-1003">Cell membrane</keyword>
<keyword id="KW-0472">Membrane</keyword>
<keyword id="KW-1185">Reference proteome</keyword>
<keyword id="KW-0808">Transferase</keyword>
<keyword id="KW-0812">Transmembrane</keyword>
<keyword id="KW-1133">Transmembrane helix</keyword>
<name>LGT_CAMC5</name>
<gene>
    <name evidence="1" type="primary">lgt</name>
    <name type="ordered locus">Ccur92_14050</name>
    <name type="ORF">CCV52592_2203</name>
</gene>
<comment type="function">
    <text evidence="1">Catalyzes the transfer of the diacylglyceryl group from phosphatidylglycerol to the sulfhydryl group of the N-terminal cysteine of a prolipoprotein, the first step in the formation of mature lipoproteins.</text>
</comment>
<comment type="catalytic activity">
    <reaction evidence="1">
        <text>L-cysteinyl-[prolipoprotein] + a 1,2-diacyl-sn-glycero-3-phospho-(1'-sn-glycerol) = an S-1,2-diacyl-sn-glyceryl-L-cysteinyl-[prolipoprotein] + sn-glycerol 1-phosphate + H(+)</text>
        <dbReference type="Rhea" id="RHEA:56712"/>
        <dbReference type="Rhea" id="RHEA-COMP:14679"/>
        <dbReference type="Rhea" id="RHEA-COMP:14680"/>
        <dbReference type="ChEBI" id="CHEBI:15378"/>
        <dbReference type="ChEBI" id="CHEBI:29950"/>
        <dbReference type="ChEBI" id="CHEBI:57685"/>
        <dbReference type="ChEBI" id="CHEBI:64716"/>
        <dbReference type="ChEBI" id="CHEBI:140658"/>
        <dbReference type="EC" id="2.5.1.145"/>
    </reaction>
</comment>
<comment type="pathway">
    <text evidence="1">Protein modification; lipoprotein biosynthesis (diacylglyceryl transfer).</text>
</comment>
<comment type="subcellular location">
    <subcellularLocation>
        <location evidence="1">Cell inner membrane</location>
        <topology evidence="1">Multi-pass membrane protein</topology>
    </subcellularLocation>
</comment>
<comment type="similarity">
    <text evidence="1">Belongs to the Lgt family.</text>
</comment>
<feature type="chain" id="PRO_1000053409" description="Phosphatidylglycerol--prolipoprotein diacylglyceryl transferase">
    <location>
        <begin position="1"/>
        <end position="270"/>
    </location>
</feature>
<feature type="transmembrane region" description="Helical" evidence="1">
    <location>
        <begin position="14"/>
        <end position="34"/>
    </location>
</feature>
<feature type="transmembrane region" description="Helical" evidence="1">
    <location>
        <begin position="60"/>
        <end position="80"/>
    </location>
</feature>
<feature type="transmembrane region" description="Helical" evidence="1">
    <location>
        <begin position="103"/>
        <end position="123"/>
    </location>
</feature>
<feature type="transmembrane region" description="Helical" evidence="1">
    <location>
        <begin position="133"/>
        <end position="153"/>
    </location>
</feature>
<feature type="transmembrane region" description="Helical" evidence="1">
    <location>
        <begin position="181"/>
        <end position="201"/>
    </location>
</feature>
<feature type="transmembrane region" description="Helical" evidence="1">
    <location>
        <begin position="209"/>
        <end position="229"/>
    </location>
</feature>
<feature type="transmembrane region" description="Helical" evidence="1">
    <location>
        <begin position="235"/>
        <end position="255"/>
    </location>
</feature>
<feature type="binding site" evidence="1">
    <location>
        <position position="152"/>
    </location>
    <ligand>
        <name>a 1,2-diacyl-sn-glycero-3-phospho-(1'-sn-glycerol)</name>
        <dbReference type="ChEBI" id="CHEBI:64716"/>
    </ligand>
</feature>
<protein>
    <recommendedName>
        <fullName evidence="1">Phosphatidylglycerol--prolipoprotein diacylglyceryl transferase</fullName>
        <ecNumber evidence="1">2.5.1.145</ecNumber>
    </recommendedName>
</protein>
<evidence type="ECO:0000255" key="1">
    <source>
        <dbReference type="HAMAP-Rule" id="MF_01147"/>
    </source>
</evidence>
<dbReference type="EC" id="2.5.1.145" evidence="1"/>
<dbReference type="EMBL" id="CP000767">
    <property type="protein sequence ID" value="ABS50415.1"/>
    <property type="molecule type" value="Genomic_DNA"/>
</dbReference>
<dbReference type="RefSeq" id="WP_011992570.1">
    <property type="nucleotide sequence ID" value="NC_009715.2"/>
</dbReference>
<dbReference type="SMR" id="A7GZR7"/>
<dbReference type="STRING" id="360105.CCV52592_2203"/>
<dbReference type="KEGG" id="ccv:CCV52592_2203"/>
<dbReference type="HOGENOM" id="CLU_013386_1_2_7"/>
<dbReference type="OrthoDB" id="871140at2"/>
<dbReference type="UniPathway" id="UPA00664"/>
<dbReference type="Proteomes" id="UP000006380">
    <property type="component" value="Chromosome"/>
</dbReference>
<dbReference type="GO" id="GO:0005886">
    <property type="term" value="C:plasma membrane"/>
    <property type="evidence" value="ECO:0007669"/>
    <property type="project" value="UniProtKB-SubCell"/>
</dbReference>
<dbReference type="GO" id="GO:0008961">
    <property type="term" value="F:phosphatidylglycerol-prolipoprotein diacylglyceryl transferase activity"/>
    <property type="evidence" value="ECO:0007669"/>
    <property type="project" value="UniProtKB-UniRule"/>
</dbReference>
<dbReference type="GO" id="GO:0042158">
    <property type="term" value="P:lipoprotein biosynthetic process"/>
    <property type="evidence" value="ECO:0007669"/>
    <property type="project" value="UniProtKB-UniRule"/>
</dbReference>
<dbReference type="HAMAP" id="MF_01147">
    <property type="entry name" value="Lgt"/>
    <property type="match status" value="1"/>
</dbReference>
<dbReference type="InterPro" id="IPR001640">
    <property type="entry name" value="Lgt"/>
</dbReference>
<dbReference type="NCBIfam" id="TIGR00544">
    <property type="entry name" value="lgt"/>
    <property type="match status" value="1"/>
</dbReference>
<dbReference type="PANTHER" id="PTHR30589:SF0">
    <property type="entry name" value="PHOSPHATIDYLGLYCEROL--PROLIPOPROTEIN DIACYLGLYCERYL TRANSFERASE"/>
    <property type="match status" value="1"/>
</dbReference>
<dbReference type="PANTHER" id="PTHR30589">
    <property type="entry name" value="PROLIPOPROTEIN DIACYLGLYCERYL TRANSFERASE"/>
    <property type="match status" value="1"/>
</dbReference>
<dbReference type="Pfam" id="PF01790">
    <property type="entry name" value="LGT"/>
    <property type="match status" value="1"/>
</dbReference>
<dbReference type="PROSITE" id="PS01311">
    <property type="entry name" value="LGT"/>
    <property type="match status" value="1"/>
</dbReference>
<organism>
    <name type="scientific">Campylobacter curvus (strain 525.92)</name>
    <dbReference type="NCBI Taxonomy" id="360105"/>
    <lineage>
        <taxon>Bacteria</taxon>
        <taxon>Pseudomonadati</taxon>
        <taxon>Campylobacterota</taxon>
        <taxon>Epsilonproteobacteria</taxon>
        <taxon>Campylobacterales</taxon>
        <taxon>Campylobacteraceae</taxon>
        <taxon>Campylobacter</taxon>
    </lineage>
</organism>
<proteinExistence type="inferred from homology"/>